<protein>
    <recommendedName>
        <fullName>Uncharacterized protein RP689</fullName>
    </recommendedName>
</protein>
<keyword id="KW-0472">Membrane</keyword>
<keyword id="KW-1185">Reference proteome</keyword>
<keyword id="KW-0808">Transferase</keyword>
<keyword id="KW-0812">Transmembrane</keyword>
<keyword id="KW-1133">Transmembrane helix</keyword>
<gene>
    <name type="ordered locus">RP689</name>
</gene>
<feature type="chain" id="PRO_0000204727" description="Uncharacterized protein RP689">
    <location>
        <begin position="1"/>
        <end position="266"/>
    </location>
</feature>
<feature type="transmembrane region" description="Helical" evidence="1">
    <location>
        <begin position="13"/>
        <end position="33"/>
    </location>
</feature>
<sequence>MMKLNTVLSFKNIIGLMLIIFAGILFYAYILQHEWQYVTLSDEQVKKYRISGKKALSLYQLMKDTHELLTKNNIKYWIESGTLLGAVRHQGIIPFDDDLDIGIMHEDEIHLQQILPQFEQLGYTVSYERAYNICKKTCLDIFIVHKEKNKFIYTNIMLRDKYPEHFFYDHELYPLKKYKFGSIEVYGPSDPIGNLNRQYPEWDKYAIIYSPHSLHLPFLSNIEKKTKFILTPELLKPAQPLGPLEDNVNIVNSAKFIRIYKDIDDH</sequence>
<comment type="subcellular location">
    <subcellularLocation>
        <location evidence="2">Membrane</location>
        <topology evidence="2">Single-pass membrane protein</topology>
    </subcellularLocation>
</comment>
<comment type="similarity">
    <text evidence="2">Belongs to the LicD transferase family.</text>
</comment>
<dbReference type="EMBL" id="AJ235272">
    <property type="protein sequence ID" value="CAA15126.1"/>
    <property type="molecule type" value="Genomic_DNA"/>
</dbReference>
<dbReference type="PIR" id="D71675">
    <property type="entry name" value="D71675"/>
</dbReference>
<dbReference type="RefSeq" id="NP_221050.1">
    <property type="nucleotide sequence ID" value="NC_000963.1"/>
</dbReference>
<dbReference type="RefSeq" id="WP_010886347.1">
    <property type="nucleotide sequence ID" value="NC_000963.1"/>
</dbReference>
<dbReference type="SMR" id="Q9ZCN4"/>
<dbReference type="STRING" id="272947.gene:17555766"/>
<dbReference type="EnsemblBacteria" id="CAA15126">
    <property type="protein sequence ID" value="CAA15126"/>
    <property type="gene ID" value="CAA15126"/>
</dbReference>
<dbReference type="KEGG" id="rpr:RP689"/>
<dbReference type="PATRIC" id="fig|272947.5.peg.711"/>
<dbReference type="eggNOG" id="COG3475">
    <property type="taxonomic scope" value="Bacteria"/>
</dbReference>
<dbReference type="HOGENOM" id="CLU_091693_0_0_5"/>
<dbReference type="OrthoDB" id="9786100at2"/>
<dbReference type="Proteomes" id="UP000002480">
    <property type="component" value="Chromosome"/>
</dbReference>
<dbReference type="GO" id="GO:0016020">
    <property type="term" value="C:membrane"/>
    <property type="evidence" value="ECO:0007669"/>
    <property type="project" value="UniProtKB-SubCell"/>
</dbReference>
<dbReference type="GO" id="GO:0016740">
    <property type="term" value="F:transferase activity"/>
    <property type="evidence" value="ECO:0007669"/>
    <property type="project" value="UniProtKB-KW"/>
</dbReference>
<dbReference type="GO" id="GO:0009100">
    <property type="term" value="P:glycoprotein metabolic process"/>
    <property type="evidence" value="ECO:0007669"/>
    <property type="project" value="UniProtKB-ARBA"/>
</dbReference>
<dbReference type="InterPro" id="IPR007074">
    <property type="entry name" value="LicD/FKTN/FKRP_NTP_transf"/>
</dbReference>
<dbReference type="InterPro" id="IPR052942">
    <property type="entry name" value="LPS_cholinephosphotransferase"/>
</dbReference>
<dbReference type="InterPro" id="IPR049064">
    <property type="entry name" value="NAD_Glu_DH_ACT3"/>
</dbReference>
<dbReference type="PANTHER" id="PTHR43404">
    <property type="entry name" value="LIPOPOLYSACCHARIDE CHOLINEPHOSPHOTRANSFERASE LICD"/>
    <property type="match status" value="1"/>
</dbReference>
<dbReference type="PANTHER" id="PTHR43404:SF2">
    <property type="entry name" value="LIPOPOLYSACCHARIDE CHOLINEPHOSPHOTRANSFERASE LICD"/>
    <property type="match status" value="1"/>
</dbReference>
<dbReference type="Pfam" id="PF21077">
    <property type="entry name" value="GDH_ACT3"/>
    <property type="match status" value="1"/>
</dbReference>
<dbReference type="Pfam" id="PF04991">
    <property type="entry name" value="LicD"/>
    <property type="match status" value="1"/>
</dbReference>
<accession>Q9ZCN4</accession>
<name>Y689_RICPR</name>
<proteinExistence type="inferred from homology"/>
<reference key="1">
    <citation type="journal article" date="1998" name="Nature">
        <title>The genome sequence of Rickettsia prowazekii and the origin of mitochondria.</title>
        <authorList>
            <person name="Andersson S.G.E."/>
            <person name="Zomorodipour A."/>
            <person name="Andersson J.O."/>
            <person name="Sicheritz-Ponten T."/>
            <person name="Alsmark U.C.M."/>
            <person name="Podowski R.M."/>
            <person name="Naeslund A.K."/>
            <person name="Eriksson A.-S."/>
            <person name="Winkler H.H."/>
            <person name="Kurland C.G."/>
        </authorList>
    </citation>
    <scope>NUCLEOTIDE SEQUENCE [LARGE SCALE GENOMIC DNA]</scope>
    <source>
        <strain>Madrid E</strain>
    </source>
</reference>
<evidence type="ECO:0000255" key="1"/>
<evidence type="ECO:0000305" key="2"/>
<organism>
    <name type="scientific">Rickettsia prowazekii (strain Madrid E)</name>
    <dbReference type="NCBI Taxonomy" id="272947"/>
    <lineage>
        <taxon>Bacteria</taxon>
        <taxon>Pseudomonadati</taxon>
        <taxon>Pseudomonadota</taxon>
        <taxon>Alphaproteobacteria</taxon>
        <taxon>Rickettsiales</taxon>
        <taxon>Rickettsiaceae</taxon>
        <taxon>Rickettsieae</taxon>
        <taxon>Rickettsia</taxon>
        <taxon>typhus group</taxon>
    </lineage>
</organism>